<keyword id="KW-0072">Autophagy</keyword>
<keyword id="KW-0963">Cytoplasm</keyword>
<keyword id="KW-0378">Hydrolase</keyword>
<keyword id="KW-0539">Nucleus</keyword>
<keyword id="KW-0645">Protease</keyword>
<keyword id="KW-0653">Protein transport</keyword>
<keyword id="KW-0788">Thiol protease</keyword>
<keyword id="KW-0813">Transport</keyword>
<accession>Q4U3V5</accession>
<name>ATG4_CRYPA</name>
<feature type="chain" id="PRO_0000317838" description="Probable cysteine protease ATG4">
    <location>
        <begin position="1"/>
        <end position="459"/>
    </location>
</feature>
<feature type="region of interest" description="Disordered" evidence="3">
    <location>
        <begin position="77"/>
        <end position="104"/>
    </location>
</feature>
<feature type="compositionally biased region" description="Low complexity" evidence="3">
    <location>
        <begin position="77"/>
        <end position="90"/>
    </location>
</feature>
<feature type="active site" description="Nucleophile" evidence="2">
    <location>
        <position position="178"/>
    </location>
</feature>
<feature type="active site" evidence="2">
    <location>
        <position position="359"/>
    </location>
</feature>
<feature type="active site" evidence="2">
    <location>
        <position position="361"/>
    </location>
</feature>
<reference key="1">
    <citation type="submission" date="2005-04" db="EMBL/GenBank/DDBJ databases">
        <title>Cryphonectria parasitica Atg4 ortholog.</title>
        <authorList>
            <person name="Allen T.D."/>
            <person name="Nuss D.L."/>
        </authorList>
    </citation>
    <scope>NUCLEOTIDE SEQUENCE [MRNA]</scope>
</reference>
<gene>
    <name type="primary">ATG4</name>
</gene>
<comment type="function">
    <text evidence="1">Cysteine protease that plays a key role in cytoplasm to vacuole transport (Cvt) and autophagy by mediating both proteolytic activation and delipidation of ATG8. Required for selective autophagic degradation of the nucleus (nucleophagy) as well as for mitophagy which contributes to regulate mitochondrial quantity and quality by eliminating the mitochondria to a basal level to fulfill cellular energy requirements and preventing excess ROS production. The protease activity is required for proteolytic activation of ATG8: cleaves the C-terminal amino acid of ATG8 to reveal a C-terminal glycine. ATG8 ubiquitin-like activity requires the exposure of the glycine at the C-terminus for its conjugation to phosphatidylethanolamine (PE) and its insertion to membranes, which is necessary for autophagy. The ATG8-PE conjugate mediates tethering between adjacent membranes and stimulates membrane hemifusion, leading to expansion of the autophagosomal membrane during autophagy. In addition to the protease activity, also catalyzes deconjugation of PE-conjugated forms of ATG8 during macroautophagy: ATG8 delipidation is required to release the protein from membranes, which facilitates multiple events during macroautophagy, and especially for efficient autophagosome biogenesis, the assembly of ATG9-containing tubulovesicular clusters into phagophores/autophagosomes, and for the disassembly of PAS-associated ATG components. ATG8 delipidation by ATG4 also recycles ATG8-PE generated on inappropriate membranes to maintain a reservoir of unlipidated ATG8 that is required for autophagosome formation at the PAS.</text>
</comment>
<comment type="catalytic activity">
    <reaction evidence="1">
        <text>[protein]-C-terminal L-amino acid-glycyl-phosphatidylethanolamide + H2O = [protein]-C-terminal L-amino acid-glycine + a 1,2-diacyl-sn-glycero-3-phosphoethanolamine</text>
        <dbReference type="Rhea" id="RHEA:67548"/>
        <dbReference type="Rhea" id="RHEA-COMP:17323"/>
        <dbReference type="Rhea" id="RHEA-COMP:17324"/>
        <dbReference type="ChEBI" id="CHEBI:15377"/>
        <dbReference type="ChEBI" id="CHEBI:64612"/>
        <dbReference type="ChEBI" id="CHEBI:172940"/>
        <dbReference type="ChEBI" id="CHEBI:172941"/>
    </reaction>
    <physiologicalReaction direction="left-to-right" evidence="1">
        <dbReference type="Rhea" id="RHEA:67549"/>
    </physiologicalReaction>
</comment>
<comment type="subcellular location">
    <subcellularLocation>
        <location evidence="1">Cytoplasm</location>
    </subcellularLocation>
    <subcellularLocation>
        <location evidence="1">Nucleus</location>
    </subcellularLocation>
    <subcellularLocation>
        <location evidence="1">Preautophagosomal structure</location>
    </subcellularLocation>
</comment>
<comment type="similarity">
    <text evidence="4">Belongs to the peptidase C54 family.</text>
</comment>
<proteinExistence type="evidence at transcript level"/>
<sequence length="459" mass="51065">MADVSQRTQQAVDTAMAGAAEMSRYGRRLLNMLWDPEPTNDRSLNRPVWCLGCSYTNEPTTVDRPDQDASSTVRATLPTTPSTTTLPYPLKAVPTTPPESSSSSFSSSLAYDELLEDAGWPIAFLDDFESRVWMTYRSEFEPISKSNDPRASAALSFAMRLRTLADQGGFSSDTGWGCMIRSGQSLLANTLVICQLGRDWRRGKAARQEREILARFADDPRAPYSLHNFVRHGAVACGKFPGEWFGPSATARCIQALANSNESSLRVYSTGDLPDVYEDSFMAVAKPDGETFHPTLILVGTRLGIDKINQVYWEALTATLQMPQSVGIAGGRPSASHYFIGAQRSGDAYEPGSYLFYLDPHCTRPALPFHEDVDQYTSDDINTCHTRRLRRLHVRDMDPSMLIGFLIKDEDDWDMWKDSVKYVQGKTIINVADHDPARGMPAEREAAIDEVETLKGEFV</sequence>
<evidence type="ECO:0000250" key="1">
    <source>
        <dbReference type="UniProtKB" id="P53867"/>
    </source>
</evidence>
<evidence type="ECO:0000250" key="2">
    <source>
        <dbReference type="UniProtKB" id="Q9Y4P1"/>
    </source>
</evidence>
<evidence type="ECO:0000256" key="3">
    <source>
        <dbReference type="SAM" id="MobiDB-lite"/>
    </source>
</evidence>
<evidence type="ECO:0000305" key="4"/>
<dbReference type="EC" id="3.4.22.-"/>
<dbReference type="EMBL" id="DQ015900">
    <property type="protein sequence ID" value="AAY51673.1"/>
    <property type="molecule type" value="mRNA"/>
</dbReference>
<dbReference type="SMR" id="Q4U3V5"/>
<dbReference type="MEROPS" id="C54.001"/>
<dbReference type="GO" id="GO:0005634">
    <property type="term" value="C:nucleus"/>
    <property type="evidence" value="ECO:0007669"/>
    <property type="project" value="UniProtKB-SubCell"/>
</dbReference>
<dbReference type="GO" id="GO:0000407">
    <property type="term" value="C:phagophore assembly site"/>
    <property type="evidence" value="ECO:0007669"/>
    <property type="project" value="UniProtKB-SubCell"/>
</dbReference>
<dbReference type="GO" id="GO:0004197">
    <property type="term" value="F:cysteine-type endopeptidase activity"/>
    <property type="evidence" value="ECO:0007669"/>
    <property type="project" value="TreeGrafter"/>
</dbReference>
<dbReference type="GO" id="GO:0019786">
    <property type="term" value="F:protein-phosphatidylethanolamide deconjugating activity"/>
    <property type="evidence" value="ECO:0007669"/>
    <property type="project" value="InterPro"/>
</dbReference>
<dbReference type="GO" id="GO:0035973">
    <property type="term" value="P:aggrephagy"/>
    <property type="evidence" value="ECO:0007669"/>
    <property type="project" value="TreeGrafter"/>
</dbReference>
<dbReference type="GO" id="GO:0000045">
    <property type="term" value="P:autophagosome assembly"/>
    <property type="evidence" value="ECO:0007669"/>
    <property type="project" value="TreeGrafter"/>
</dbReference>
<dbReference type="GO" id="GO:0000423">
    <property type="term" value="P:mitophagy"/>
    <property type="evidence" value="ECO:0007669"/>
    <property type="project" value="TreeGrafter"/>
</dbReference>
<dbReference type="GO" id="GO:0034727">
    <property type="term" value="P:piecemeal microautophagy of the nucleus"/>
    <property type="evidence" value="ECO:0007669"/>
    <property type="project" value="TreeGrafter"/>
</dbReference>
<dbReference type="GO" id="GO:0016485">
    <property type="term" value="P:protein processing"/>
    <property type="evidence" value="ECO:0007669"/>
    <property type="project" value="TreeGrafter"/>
</dbReference>
<dbReference type="GO" id="GO:0015031">
    <property type="term" value="P:protein transport"/>
    <property type="evidence" value="ECO:0007669"/>
    <property type="project" value="UniProtKB-KW"/>
</dbReference>
<dbReference type="InterPro" id="IPR038765">
    <property type="entry name" value="Papain-like_cys_pep_sf"/>
</dbReference>
<dbReference type="InterPro" id="IPR005078">
    <property type="entry name" value="Peptidase_C54"/>
</dbReference>
<dbReference type="InterPro" id="IPR046792">
    <property type="entry name" value="Peptidase_C54_cat"/>
</dbReference>
<dbReference type="PANTHER" id="PTHR22624:SF49">
    <property type="entry name" value="CYSTEINE PROTEASE"/>
    <property type="match status" value="1"/>
</dbReference>
<dbReference type="PANTHER" id="PTHR22624">
    <property type="entry name" value="CYSTEINE PROTEASE ATG4"/>
    <property type="match status" value="1"/>
</dbReference>
<dbReference type="Pfam" id="PF03416">
    <property type="entry name" value="Peptidase_C54"/>
    <property type="match status" value="1"/>
</dbReference>
<dbReference type="SUPFAM" id="SSF54001">
    <property type="entry name" value="Cysteine proteinases"/>
    <property type="match status" value="1"/>
</dbReference>
<protein>
    <recommendedName>
        <fullName>Probable cysteine protease ATG4</fullName>
        <ecNumber>3.4.22.-</ecNumber>
    </recommendedName>
    <alternativeName>
        <fullName>Autophagy-related protein 4</fullName>
    </alternativeName>
</protein>
<organism>
    <name type="scientific">Cryphonectria parasitica</name>
    <name type="common">Chestnut blight fungus</name>
    <name type="synonym">Endothia parasitica</name>
    <dbReference type="NCBI Taxonomy" id="5116"/>
    <lineage>
        <taxon>Eukaryota</taxon>
        <taxon>Fungi</taxon>
        <taxon>Dikarya</taxon>
        <taxon>Ascomycota</taxon>
        <taxon>Pezizomycotina</taxon>
        <taxon>Sordariomycetes</taxon>
        <taxon>Sordariomycetidae</taxon>
        <taxon>Diaporthales</taxon>
        <taxon>Cryphonectriaceae</taxon>
        <taxon>Cryphonectria-Endothia species complex</taxon>
        <taxon>Cryphonectria</taxon>
    </lineage>
</organism>